<sequence>MWFFKVGALLFLAALVSANNATTGPKVLCYYDGQMSLREGLGKITVTDIELALPFCTHLLYGFAGVNPETYRLKALDESLELDSGKGQYRLATTLKRRYPNLKVLLSVGGYKDLAEEKPFEKYLTLLESAGSRTAFVNSVYSTLKTYDFDGLDLAWQFPQTKPKRIRGWTGKVWHGFKKLFTGDSVLDPKADEHREEFTALVRDLKNALVADNFILGLTVLPHVNESIFMDVPLLKDNLDYVNLASFDQQTPERNPKEGDYTAPIYEPSERVEGNNVDAEASYWLKQGTPAGKIVIGIPTYGRGWKLVEKSGITGVPPIPADGPSIPGPHSGINGFYSWAEVCAKLPNPGNANLQGADQPLRKIGDPTRRFGAYAFRIPDENEEHGIWLSYEDPDTAGNKAAYVKAKGLGGISIFDLGNDDVRGACAGDKFPILRAAKYRL</sequence>
<name>AGBR1_AEDAE</name>
<organism evidence="7">
    <name type="scientific">Aedes aegypti</name>
    <name type="common">Yellowfever mosquito</name>
    <name type="synonym">Culex aegypti</name>
    <dbReference type="NCBI Taxonomy" id="7159"/>
    <lineage>
        <taxon>Eukaryota</taxon>
        <taxon>Metazoa</taxon>
        <taxon>Ecdysozoa</taxon>
        <taxon>Arthropoda</taxon>
        <taxon>Hexapoda</taxon>
        <taxon>Insecta</taxon>
        <taxon>Pterygota</taxon>
        <taxon>Neoptera</taxon>
        <taxon>Endopterygota</taxon>
        <taxon>Diptera</taxon>
        <taxon>Nematocera</taxon>
        <taxon>Culicoidea</taxon>
        <taxon>Culicidae</taxon>
        <taxon>Culicinae</taxon>
        <taxon>Aedini</taxon>
        <taxon>Aedes</taxon>
        <taxon>Stegomyia</taxon>
    </lineage>
</organism>
<proteinExistence type="evidence at protein level"/>
<protein>
    <recommendedName>
        <fullName evidence="5">Bacteria-responsive protein 1</fullName>
        <shortName evidence="5">AgBR1</shortName>
    </recommendedName>
</protein>
<keyword id="KW-1015">Disulfide bond</keyword>
<keyword id="KW-0325">Glycoprotein</keyword>
<keyword id="KW-1185">Reference proteome</keyword>
<keyword id="KW-0964">Secreted</keyword>
<keyword id="KW-0732">Signal</keyword>
<dbReference type="RefSeq" id="XP_001660745.2">
    <property type="nucleotide sequence ID" value="XM_001660695.2"/>
</dbReference>
<dbReference type="SMR" id="A0A1S4F0I0"/>
<dbReference type="FunCoup" id="A0A1S4F0I0">
    <property type="interactions" value="79"/>
</dbReference>
<dbReference type="EnsemblMetazoa" id="AAEL001965-RA">
    <property type="protein sequence ID" value="AAEL001965-PA"/>
    <property type="gene ID" value="AAEL001965"/>
</dbReference>
<dbReference type="GeneID" id="5573204"/>
<dbReference type="VEuPathDB" id="VectorBase:AAEL001965"/>
<dbReference type="InParanoid" id="A0A1S4F0I0"/>
<dbReference type="OrthoDB" id="76388at2759"/>
<dbReference type="Proteomes" id="UP000008820">
    <property type="component" value="Chromosome 2"/>
</dbReference>
<dbReference type="GO" id="GO:0005576">
    <property type="term" value="C:extracellular region"/>
    <property type="evidence" value="ECO:0007669"/>
    <property type="project" value="UniProtKB-SubCell"/>
</dbReference>
<dbReference type="GO" id="GO:0008061">
    <property type="term" value="F:chitin binding"/>
    <property type="evidence" value="ECO:0007669"/>
    <property type="project" value="InterPro"/>
</dbReference>
<dbReference type="GO" id="GO:0004568">
    <property type="term" value="F:chitinase activity"/>
    <property type="evidence" value="ECO:0007669"/>
    <property type="project" value="TreeGrafter"/>
</dbReference>
<dbReference type="GO" id="GO:0005975">
    <property type="term" value="P:carbohydrate metabolic process"/>
    <property type="evidence" value="ECO:0007669"/>
    <property type="project" value="InterPro"/>
</dbReference>
<dbReference type="GO" id="GO:0006032">
    <property type="term" value="P:chitin catabolic process"/>
    <property type="evidence" value="ECO:0007669"/>
    <property type="project" value="TreeGrafter"/>
</dbReference>
<dbReference type="CDD" id="cd02873">
    <property type="entry name" value="GH18_IDGF"/>
    <property type="match status" value="1"/>
</dbReference>
<dbReference type="FunFam" id="3.10.50.10:FF:000007">
    <property type="entry name" value="chitinase-like protein Idgf4"/>
    <property type="match status" value="1"/>
</dbReference>
<dbReference type="FunFam" id="3.20.20.80:FF:000071">
    <property type="entry name" value="Imaginal disc growth factor"/>
    <property type="match status" value="1"/>
</dbReference>
<dbReference type="Gene3D" id="3.10.50.10">
    <property type="match status" value="1"/>
</dbReference>
<dbReference type="Gene3D" id="3.20.20.80">
    <property type="entry name" value="Glycosidases"/>
    <property type="match status" value="1"/>
</dbReference>
<dbReference type="InterPro" id="IPR011583">
    <property type="entry name" value="Chitinase_II/V-like_cat"/>
</dbReference>
<dbReference type="InterPro" id="IPR029070">
    <property type="entry name" value="Chitinase_insertion_sf"/>
</dbReference>
<dbReference type="InterPro" id="IPR001223">
    <property type="entry name" value="Glyco_hydro18_cat"/>
</dbReference>
<dbReference type="InterPro" id="IPR017853">
    <property type="entry name" value="Glycoside_hydrolase_SF"/>
</dbReference>
<dbReference type="InterPro" id="IPR050314">
    <property type="entry name" value="Glycosyl_Hydrlase_18"/>
</dbReference>
<dbReference type="InterPro" id="IPR015520">
    <property type="entry name" value="IDGF"/>
</dbReference>
<dbReference type="PANTHER" id="PTHR11177">
    <property type="entry name" value="CHITINASE"/>
    <property type="match status" value="1"/>
</dbReference>
<dbReference type="PANTHER" id="PTHR11177:SF235">
    <property type="entry name" value="CHITINASE-LIKE PROTEIN IDGF1-RELATED"/>
    <property type="match status" value="1"/>
</dbReference>
<dbReference type="Pfam" id="PF00704">
    <property type="entry name" value="Glyco_hydro_18"/>
    <property type="match status" value="1"/>
</dbReference>
<dbReference type="SMART" id="SM00636">
    <property type="entry name" value="Glyco_18"/>
    <property type="match status" value="1"/>
</dbReference>
<dbReference type="SUPFAM" id="SSF51445">
    <property type="entry name" value="(Trans)glycosidases"/>
    <property type="match status" value="1"/>
</dbReference>
<dbReference type="SUPFAM" id="SSF54556">
    <property type="entry name" value="Chitinase insertion domain"/>
    <property type="match status" value="1"/>
</dbReference>
<dbReference type="PROSITE" id="PS51910">
    <property type="entry name" value="GH18_2"/>
    <property type="match status" value="1"/>
</dbReference>
<comment type="function">
    <text evidence="4">Promotes recruitment of host neutrophils at the bite site (PubMed:30858571). Induces expression of IL1B and IL6 in the skin of the host (PubMed:30858571).</text>
</comment>
<comment type="function">
    <text evidence="4">(Microbial infection) Enhances Zika virus replication and exacerbates disease pathogenesis in the host.</text>
</comment>
<comment type="subcellular location">
    <subcellularLocation>
        <location evidence="4">Secreted</location>
    </subcellularLocation>
</comment>
<comment type="tissue specificity">
    <text evidence="4">Salivary gland (at protein level).</text>
</comment>
<comment type="disruption phenotype">
    <text evidence="4">RNAi-mediated knockdown reduces neutrophil recruitment in the host skin after mosquito bite.</text>
</comment>
<comment type="miscellaneous">
    <text evidence="4">Immunization against the protein decreases early inflammatory responses in the skin of mice bitten by mosquitoes infected with Zika virus and partially protects susceptible mice from lethal Zika virus infection.</text>
</comment>
<comment type="similarity">
    <text evidence="6">Belongs to the glycosyl hydrolase 18 family. IDGF subfamily.</text>
</comment>
<evidence type="ECO:0000255" key="1"/>
<evidence type="ECO:0000255" key="2">
    <source>
        <dbReference type="PROSITE-ProRule" id="PRU00498"/>
    </source>
</evidence>
<evidence type="ECO:0000255" key="3">
    <source>
        <dbReference type="PROSITE-ProRule" id="PRU01258"/>
    </source>
</evidence>
<evidence type="ECO:0000269" key="4">
    <source>
    </source>
</evidence>
<evidence type="ECO:0000303" key="5">
    <source>
    </source>
</evidence>
<evidence type="ECO:0000305" key="6"/>
<evidence type="ECO:0000312" key="7">
    <source>
        <dbReference type="Proteomes" id="UP000008820"/>
    </source>
</evidence>
<reference evidence="7" key="1">
    <citation type="journal article" date="2018" name="Nature">
        <title>Improved reference genome of Aedes aegypti informs arbovirus vector control.</title>
        <authorList>
            <person name="Matthews B.J."/>
            <person name="Dudchenko O."/>
            <person name="Kingan S.B."/>
            <person name="Koren S."/>
            <person name="Antoshechkin I."/>
            <person name="Crawford J.E."/>
            <person name="Glassford W.J."/>
            <person name="Herre M."/>
            <person name="Redmond S.N."/>
            <person name="Rose N.H."/>
            <person name="Weedall G.D."/>
            <person name="Wu Y."/>
            <person name="Batra S.S."/>
            <person name="Brito-Sierra C.A."/>
            <person name="Buckingham S.D."/>
            <person name="Campbell C.L."/>
            <person name="Chan S."/>
            <person name="Cox E."/>
            <person name="Evans B.R."/>
            <person name="Fansiri T."/>
            <person name="Filipovic I."/>
            <person name="Fontaine A."/>
            <person name="Gloria-Soria A."/>
            <person name="Hall R."/>
            <person name="Joardar V.S."/>
            <person name="Jones A.K."/>
            <person name="Kay R.G.G."/>
            <person name="Kodali V.K."/>
            <person name="Lee J."/>
            <person name="Lycett G.J."/>
            <person name="Mitchell S.N."/>
            <person name="Muehling J."/>
            <person name="Murphy M.R."/>
            <person name="Omer A.D."/>
            <person name="Partridge F.A."/>
            <person name="Peluso P."/>
            <person name="Aiden A.P."/>
            <person name="Ramasamy V."/>
            <person name="Rasic G."/>
            <person name="Roy S."/>
            <person name="Saavedra-Rodriguez K."/>
            <person name="Sharan S."/>
            <person name="Sharma A."/>
            <person name="Smith M.L."/>
            <person name="Turner J."/>
            <person name="Weakley A.M."/>
            <person name="Zhao Z."/>
            <person name="Akbari O.S."/>
            <person name="Black W.C. IV"/>
            <person name="Cao H."/>
            <person name="Darby A.C."/>
            <person name="Hill C.A."/>
            <person name="Johnston J.S."/>
            <person name="Murphy T.D."/>
            <person name="Raikhel A.S."/>
            <person name="Sattelle D.B."/>
            <person name="Sharakhov I.V."/>
            <person name="White B.J."/>
            <person name="Zhao L."/>
            <person name="Aiden E.L."/>
            <person name="Mann R.S."/>
            <person name="Lambrechts L."/>
            <person name="Powell J.R."/>
            <person name="Sharakhova M.V."/>
            <person name="Tu Z."/>
            <person name="Robertson H.M."/>
            <person name="McBride C.S."/>
            <person name="Hastie A.R."/>
            <person name="Korlach J."/>
            <person name="Neafsey D.E."/>
            <person name="Phillippy A.M."/>
            <person name="Vosshall L.B."/>
        </authorList>
    </citation>
    <scope>NUCLEOTIDE SEQUENCE [LARGE SCALE GENOMIC DNA]</scope>
    <source>
        <strain evidence="7">LVP_AGWG</strain>
    </source>
</reference>
<reference evidence="6" key="2">
    <citation type="journal article" date="2019" name="Nat. Microbiol.">
        <title>Aedes aegypti AgBR1 antibodies modulate early Zika virus infection of mice.</title>
        <authorList>
            <person name="Uraki R."/>
            <person name="Hastings A.K."/>
            <person name="Marin-Lopez A."/>
            <person name="Sumida T."/>
            <person name="Takahashi T."/>
            <person name="Grover J.R."/>
            <person name="Iwasaki A."/>
            <person name="Hafler D.A."/>
            <person name="Montgomery R.R."/>
            <person name="Fikrig E."/>
        </authorList>
    </citation>
    <scope>FUNCTION</scope>
    <scope>FUNCTION (MICROBIAL INFECTION)</scope>
    <scope>SUBCELLULAR LOCATION</scope>
    <scope>TISSUE SPECIFICITY</scope>
    <scope>DISRUPTION PHENOTYPE</scope>
</reference>
<feature type="signal peptide" evidence="1">
    <location>
        <begin position="1"/>
        <end position="18"/>
    </location>
</feature>
<feature type="chain" id="PRO_0000461066" description="Bacteria-responsive protein 1" evidence="1">
    <location>
        <begin position="19"/>
        <end position="441"/>
    </location>
</feature>
<feature type="domain" description="GH18" evidence="3">
    <location>
        <begin position="25"/>
        <end position="441"/>
    </location>
</feature>
<feature type="glycosylation site" description="N-linked (GlcNAc...) asparagine" evidence="2">
    <location>
        <position position="20"/>
    </location>
</feature>
<feature type="glycosylation site" description="N-linked (GlcNAc...) asparagine" evidence="2">
    <location>
        <position position="225"/>
    </location>
</feature>
<feature type="disulfide bond" evidence="3">
    <location>
        <begin position="29"/>
        <end position="56"/>
    </location>
</feature>
<accession>A0A1S4F0I0</accession>